<name>SELA_SALTY</name>
<gene>
    <name evidence="1" type="primary">selA</name>
    <name type="ordered locus">STM3683</name>
</gene>
<feature type="chain" id="PRO_0000189616" description="L-seryl-tRNA(Sec) selenium transferase">
    <location>
        <begin position="1"/>
        <end position="463"/>
    </location>
</feature>
<feature type="modified residue" description="N6-(pyridoxal phosphate)lysine" evidence="1">
    <location>
        <position position="295"/>
    </location>
</feature>
<keyword id="KW-0963">Cytoplasm</keyword>
<keyword id="KW-0648">Protein biosynthesis</keyword>
<keyword id="KW-0663">Pyridoxal phosphate</keyword>
<keyword id="KW-1185">Reference proteome</keyword>
<keyword id="KW-0711">Selenium</keyword>
<keyword id="KW-0808">Transferase</keyword>
<organism>
    <name type="scientific">Salmonella typhimurium (strain LT2 / SGSC1412 / ATCC 700720)</name>
    <dbReference type="NCBI Taxonomy" id="99287"/>
    <lineage>
        <taxon>Bacteria</taxon>
        <taxon>Pseudomonadati</taxon>
        <taxon>Pseudomonadota</taxon>
        <taxon>Gammaproteobacteria</taxon>
        <taxon>Enterobacterales</taxon>
        <taxon>Enterobacteriaceae</taxon>
        <taxon>Salmonella</taxon>
    </lineage>
</organism>
<protein>
    <recommendedName>
        <fullName evidence="1">L-seryl-tRNA(Sec) selenium transferase</fullName>
        <ecNumber evidence="1">2.9.1.1</ecNumber>
    </recommendedName>
    <alternativeName>
        <fullName evidence="1">Selenocysteine synthase</fullName>
        <shortName evidence="1">Sec synthase</shortName>
    </alternativeName>
    <alternativeName>
        <fullName evidence="1">Selenocysteinyl-tRNA(Sec) synthase</fullName>
    </alternativeName>
</protein>
<reference key="1">
    <citation type="journal article" date="2001" name="Nature">
        <title>Complete genome sequence of Salmonella enterica serovar Typhimurium LT2.</title>
        <authorList>
            <person name="McClelland M."/>
            <person name="Sanderson K.E."/>
            <person name="Spieth J."/>
            <person name="Clifton S.W."/>
            <person name="Latreille P."/>
            <person name="Courtney L."/>
            <person name="Porwollik S."/>
            <person name="Ali J."/>
            <person name="Dante M."/>
            <person name="Du F."/>
            <person name="Hou S."/>
            <person name="Layman D."/>
            <person name="Leonard S."/>
            <person name="Nguyen C."/>
            <person name="Scott K."/>
            <person name="Holmes A."/>
            <person name="Grewal N."/>
            <person name="Mulvaney E."/>
            <person name="Ryan E."/>
            <person name="Sun H."/>
            <person name="Florea L."/>
            <person name="Miller W."/>
            <person name="Stoneking T."/>
            <person name="Nhan M."/>
            <person name="Waterston R."/>
            <person name="Wilson R.K."/>
        </authorList>
    </citation>
    <scope>NUCLEOTIDE SEQUENCE [LARGE SCALE GENOMIC DNA]</scope>
    <source>
        <strain>LT2 / SGSC1412 / ATCC 700720</strain>
    </source>
</reference>
<proteinExistence type="inferred from homology"/>
<sequence length="463" mass="50859">MTSETRTLYSQLPAIDRLLHDSAFLSLRDRYGHTQVVDLLRRMLDDARDVIRNTQTLPDWYADWAQEAKLRLENAAQSALRPVINLTGTVLHTNLGRALQAQEAIEAVTQAMRAPVTLEYDLDGAGRGHRDRALATLLCRITGAEDACIVNNNAAAVLLMLAATASGKEVVVSRGELVEIGGAFRIPDVMRQAGCTLHEVGTTNRTHAKDYRQAVNENTGLLMKVHTSNYSIEGFTKTVEEAELAEIGRELDIPVVADLGSGSLVDLSQYGLPKEPMPQQLIAAGVSLVSFSGDKLLGGPQAGIIVGKKAMIAQLQSHPLKRALRADKMTLAALEATLRLYLHPEALAEKLPTLRLLTRSEASIREQAQRLQARLAARYGDEFALEVKPCLSQIGSGSLPVDRLPSAAMTFTPHDGRGSRLEALAARWRMLPVPVIGRIYDGRLWLDMRCLEDESRFMEMMLK</sequence>
<dbReference type="EC" id="2.9.1.1" evidence="1"/>
<dbReference type="EMBL" id="AE006468">
    <property type="protein sequence ID" value="AAL22542.1"/>
    <property type="molecule type" value="Genomic_DNA"/>
</dbReference>
<dbReference type="RefSeq" id="NP_462583.1">
    <property type="nucleotide sequence ID" value="NC_003197.2"/>
</dbReference>
<dbReference type="RefSeq" id="WP_000200187.1">
    <property type="nucleotide sequence ID" value="NC_003197.2"/>
</dbReference>
<dbReference type="SMR" id="Q8ZL69"/>
<dbReference type="STRING" id="99287.STM3683"/>
<dbReference type="PaxDb" id="99287-STM3683"/>
<dbReference type="GeneID" id="1255207"/>
<dbReference type="KEGG" id="stm:STM3683"/>
<dbReference type="PATRIC" id="fig|99287.12.peg.3896"/>
<dbReference type="HOGENOM" id="CLU_038142_1_0_6"/>
<dbReference type="OMA" id="GATNRTH"/>
<dbReference type="PhylomeDB" id="Q8ZL69"/>
<dbReference type="BioCyc" id="SENT99287:STM3683-MONOMER"/>
<dbReference type="UniPathway" id="UPA00906">
    <property type="reaction ID" value="UER00896"/>
</dbReference>
<dbReference type="Proteomes" id="UP000001014">
    <property type="component" value="Chromosome"/>
</dbReference>
<dbReference type="GO" id="GO:0005737">
    <property type="term" value="C:cytoplasm"/>
    <property type="evidence" value="ECO:0007669"/>
    <property type="project" value="UniProtKB-SubCell"/>
</dbReference>
<dbReference type="GO" id="GO:0004125">
    <property type="term" value="F:L-seryl-tRNA(Sec) selenium transferase activity"/>
    <property type="evidence" value="ECO:0000318"/>
    <property type="project" value="GO_Central"/>
</dbReference>
<dbReference type="GO" id="GO:0001717">
    <property type="term" value="P:conversion of seryl-tRNAsec to selenocys-tRNAsec"/>
    <property type="evidence" value="ECO:0007669"/>
    <property type="project" value="UniProtKB-UniRule"/>
</dbReference>
<dbReference type="GO" id="GO:0001514">
    <property type="term" value="P:selenocysteine incorporation"/>
    <property type="evidence" value="ECO:0007669"/>
    <property type="project" value="UniProtKB-UniRule"/>
</dbReference>
<dbReference type="FunFam" id="3.40.640.10:FF:000028">
    <property type="entry name" value="L-seryl-tRNA(Sec) selenium transferase"/>
    <property type="match status" value="1"/>
</dbReference>
<dbReference type="FunFam" id="3.90.1150.180:FF:000001">
    <property type="entry name" value="L-seryl-tRNA(Sec) selenium transferase"/>
    <property type="match status" value="1"/>
</dbReference>
<dbReference type="Gene3D" id="3.90.1150.180">
    <property type="match status" value="1"/>
</dbReference>
<dbReference type="Gene3D" id="3.40.640.10">
    <property type="entry name" value="Type I PLP-dependent aspartate aminotransferase-like (Major domain)"/>
    <property type="match status" value="1"/>
</dbReference>
<dbReference type="HAMAP" id="MF_00423">
    <property type="entry name" value="SelA"/>
    <property type="match status" value="1"/>
</dbReference>
<dbReference type="InterPro" id="IPR015424">
    <property type="entry name" value="PyrdxlP-dep_Trfase"/>
</dbReference>
<dbReference type="InterPro" id="IPR015421">
    <property type="entry name" value="PyrdxlP-dep_Trfase_major"/>
</dbReference>
<dbReference type="InterPro" id="IPR018319">
    <property type="entry name" value="SelA-like"/>
</dbReference>
<dbReference type="InterPro" id="IPR004534">
    <property type="entry name" value="SelA_trans"/>
</dbReference>
<dbReference type="InterPro" id="IPR025862">
    <property type="entry name" value="SelA_trans_N_dom"/>
</dbReference>
<dbReference type="NCBIfam" id="TIGR00474">
    <property type="entry name" value="selA"/>
    <property type="match status" value="1"/>
</dbReference>
<dbReference type="PANTHER" id="PTHR32328">
    <property type="entry name" value="L-SERYL-TRNA(SEC) SELENIUM TRANSFERASE"/>
    <property type="match status" value="1"/>
</dbReference>
<dbReference type="PANTHER" id="PTHR32328:SF0">
    <property type="entry name" value="L-SERYL-TRNA(SEC) SELENIUM TRANSFERASE"/>
    <property type="match status" value="1"/>
</dbReference>
<dbReference type="Pfam" id="PF12390">
    <property type="entry name" value="Se-cys_synth_N"/>
    <property type="match status" value="1"/>
</dbReference>
<dbReference type="Pfam" id="PF03841">
    <property type="entry name" value="SelA"/>
    <property type="match status" value="1"/>
</dbReference>
<dbReference type="SUPFAM" id="SSF53383">
    <property type="entry name" value="PLP-dependent transferases"/>
    <property type="match status" value="1"/>
</dbReference>
<accession>Q8ZL69</accession>
<comment type="function">
    <text evidence="1">Converts seryl-tRNA(Sec) to selenocysteinyl-tRNA(Sec) required for selenoprotein biosynthesis.</text>
</comment>
<comment type="catalytic activity">
    <reaction evidence="1">
        <text>L-seryl-tRNA(Sec) + selenophosphate + H(+) = L-selenocysteinyl-tRNA(Sec) + phosphate</text>
        <dbReference type="Rhea" id="RHEA:22728"/>
        <dbReference type="Rhea" id="RHEA-COMP:9742"/>
        <dbReference type="Rhea" id="RHEA-COMP:9743"/>
        <dbReference type="ChEBI" id="CHEBI:15378"/>
        <dbReference type="ChEBI" id="CHEBI:16144"/>
        <dbReference type="ChEBI" id="CHEBI:43474"/>
        <dbReference type="ChEBI" id="CHEBI:78533"/>
        <dbReference type="ChEBI" id="CHEBI:78573"/>
        <dbReference type="EC" id="2.9.1.1"/>
    </reaction>
</comment>
<comment type="cofactor">
    <cofactor evidence="1">
        <name>pyridoxal 5'-phosphate</name>
        <dbReference type="ChEBI" id="CHEBI:597326"/>
    </cofactor>
</comment>
<comment type="pathway">
    <text evidence="1">Aminoacyl-tRNA biosynthesis; selenocysteinyl-tRNA(Sec) biosynthesis; selenocysteinyl-tRNA(Sec) from L-seryl-tRNA(Sec) (bacterial route): step 1/1.</text>
</comment>
<comment type="subunit">
    <text evidence="1">Homodecamer; pentamer of dimers. Binds only one seryl-tRNA(Sec) per dimer.</text>
</comment>
<comment type="subcellular location">
    <subcellularLocation>
        <location evidence="1">Cytoplasm</location>
    </subcellularLocation>
</comment>
<comment type="similarity">
    <text evidence="1">Belongs to the SelA family.</text>
</comment>
<evidence type="ECO:0000255" key="1">
    <source>
        <dbReference type="HAMAP-Rule" id="MF_00423"/>
    </source>
</evidence>